<protein>
    <recommendedName>
        <fullName>Monosaccharide transporter</fullName>
    </recommendedName>
</protein>
<dbReference type="GO" id="GO:0005576">
    <property type="term" value="C:extracellular region"/>
    <property type="evidence" value="ECO:0007669"/>
    <property type="project" value="UniProtKB-KW"/>
</dbReference>
<feature type="chain" id="PRO_0000315930" description="Monosaccharide transporter">
    <location>
        <begin position="1" status="less than"/>
        <end position="14" status="greater than"/>
    </location>
</feature>
<feature type="unsure residue" description="F or M" evidence="1">
    <location>
        <position position="3"/>
    </location>
</feature>
<feature type="unsure residue" description="K or Q" evidence="1">
    <location>
        <position position="14"/>
    </location>
</feature>
<feature type="non-terminal residue" evidence="2">
    <location>
        <position position="1"/>
    </location>
</feature>
<feature type="non-terminal residue" evidence="2">
    <location>
        <position position="14"/>
    </location>
</feature>
<evidence type="ECO:0000269" key="1">
    <source>
    </source>
</evidence>
<evidence type="ECO:0000303" key="2">
    <source>
    </source>
</evidence>
<evidence type="ECO:0000305" key="3"/>
<keyword id="KW-0134">Cell wall</keyword>
<keyword id="KW-0903">Direct protein sequencing</keyword>
<keyword id="KW-0964">Secreted</keyword>
<organism>
    <name type="scientific">Taxus baccata</name>
    <name type="common">English yew</name>
    <dbReference type="NCBI Taxonomy" id="25629"/>
    <lineage>
        <taxon>Eukaryota</taxon>
        <taxon>Viridiplantae</taxon>
        <taxon>Streptophyta</taxon>
        <taxon>Embryophyta</taxon>
        <taxon>Tracheophyta</taxon>
        <taxon>Spermatophyta</taxon>
        <taxon>Pinopsida</taxon>
        <taxon>Pinidae</taxon>
        <taxon>Conifers II</taxon>
        <taxon>Cupressales</taxon>
        <taxon>Taxaceae</taxon>
        <taxon>Taxus</taxon>
    </lineage>
</organism>
<proteinExistence type="evidence at protein level"/>
<comment type="subcellular location">
    <subcellularLocation>
        <location evidence="1">Secreted</location>
        <location evidence="1">Cell wall</location>
    </subcellularLocation>
</comment>
<reference evidence="3" key="1">
    <citation type="journal article" date="2009" name="J. Plant Physiol.">
        <title>Analysis of the soluble cell wall proteome of gymnosperms.</title>
        <authorList>
            <person name="Uzal E.N."/>
            <person name="Gomez-Ros L.V."/>
            <person name="Hernandez J.A."/>
            <person name="Pedreno M.A."/>
            <person name="Cuello J."/>
            <person name="Ros Barcelo A."/>
        </authorList>
    </citation>
    <scope>PROTEIN SEQUENCE</scope>
    <scope>SUBCELLULAR LOCATION</scope>
    <source>
        <strain evidence="1">PC-1008</strain>
        <tissue evidence="1">Callus</tissue>
    </source>
</reference>
<sequence length="14" mass="1723">YNFNVYTSCTARRK</sequence>
<accession>P85359</accession>
<name>MONTR_TAXBA</name>